<proteinExistence type="inferred from homology"/>
<accession>Q2TXG3</accession>
<dbReference type="EC" id="2.3.1.86" evidence="8"/>
<dbReference type="EC" id="3.1.2.14" evidence="2"/>
<dbReference type="EC" id="4.2.1.59" evidence="2"/>
<dbReference type="EC" id="1.3.1.9" evidence="2"/>
<dbReference type="EC" id="2.3.1.38" evidence="2"/>
<dbReference type="EC" id="2.3.1.39" evidence="2"/>
<dbReference type="EMBL" id="BA000056">
    <property type="protein sequence ID" value="BAE66060.1"/>
    <property type="molecule type" value="Genomic_DNA"/>
</dbReference>
<dbReference type="RefSeq" id="XP_001827193.1">
    <property type="nucleotide sequence ID" value="XM_001827141.1"/>
</dbReference>
<dbReference type="SMR" id="Q2TXG3"/>
<dbReference type="STRING" id="510516.Q2TXG3"/>
<dbReference type="EnsemblFungi" id="BAE66060">
    <property type="protein sequence ID" value="BAE66060"/>
    <property type="gene ID" value="AO090010000156"/>
</dbReference>
<dbReference type="GeneID" id="5999327"/>
<dbReference type="KEGG" id="aor:AO090010000156"/>
<dbReference type="VEuPathDB" id="FungiDB:AO090010000156"/>
<dbReference type="HOGENOM" id="CLU_000114_5_0_1"/>
<dbReference type="OMA" id="CAGHVRN"/>
<dbReference type="OrthoDB" id="57876at5052"/>
<dbReference type="Proteomes" id="UP000006564">
    <property type="component" value="Chromosome 8"/>
</dbReference>
<dbReference type="GO" id="GO:0005835">
    <property type="term" value="C:fatty acid synthase complex"/>
    <property type="evidence" value="ECO:0007669"/>
    <property type="project" value="InterPro"/>
</dbReference>
<dbReference type="GO" id="GO:0019171">
    <property type="term" value="F:(3R)-hydroxyacyl-[acyl-carrier-protein] dehydratase activity"/>
    <property type="evidence" value="ECO:0007669"/>
    <property type="project" value="UniProtKB-EC"/>
</dbReference>
<dbReference type="GO" id="GO:0004313">
    <property type="term" value="F:[acyl-carrier-protein] S-acetyltransferase activity"/>
    <property type="evidence" value="ECO:0007669"/>
    <property type="project" value="UniProtKB-EC"/>
</dbReference>
<dbReference type="GO" id="GO:0004314">
    <property type="term" value="F:[acyl-carrier-protein] S-malonyltransferase activity"/>
    <property type="evidence" value="ECO:0007669"/>
    <property type="project" value="UniProtKB-EC"/>
</dbReference>
<dbReference type="GO" id="GO:0004318">
    <property type="term" value="F:enoyl-[acyl-carrier-protein] reductase (NADH) activity"/>
    <property type="evidence" value="ECO:0007669"/>
    <property type="project" value="UniProtKB-EC"/>
</dbReference>
<dbReference type="GO" id="GO:0004312">
    <property type="term" value="F:fatty acid synthase activity"/>
    <property type="evidence" value="ECO:0007669"/>
    <property type="project" value="InterPro"/>
</dbReference>
<dbReference type="GO" id="GO:0016297">
    <property type="term" value="F:fatty acyl-[ACP] hydrolase activity"/>
    <property type="evidence" value="ECO:0007669"/>
    <property type="project" value="UniProtKB-EC"/>
</dbReference>
<dbReference type="GO" id="GO:0004321">
    <property type="term" value="F:fatty-acyl-CoA synthase activity"/>
    <property type="evidence" value="ECO:0007669"/>
    <property type="project" value="UniProtKB-EC"/>
</dbReference>
<dbReference type="GO" id="GO:0006633">
    <property type="term" value="P:fatty acid biosynthetic process"/>
    <property type="evidence" value="ECO:0007669"/>
    <property type="project" value="InterPro"/>
</dbReference>
<dbReference type="CDD" id="cd03447">
    <property type="entry name" value="FAS_MaoC"/>
    <property type="match status" value="1"/>
</dbReference>
<dbReference type="FunFam" id="1.20.930.70:FF:000001">
    <property type="entry name" value="Fatty acid synthase beta subunit dehydratase"/>
    <property type="match status" value="1"/>
</dbReference>
<dbReference type="FunFam" id="3.20.20.70:FF:000078">
    <property type="entry name" value="Fatty acid synthase beta subunit dehydratase"/>
    <property type="match status" value="1"/>
</dbReference>
<dbReference type="Gene3D" id="1.20.1050.120">
    <property type="match status" value="1"/>
</dbReference>
<dbReference type="Gene3D" id="1.20.930.70">
    <property type="match status" value="1"/>
</dbReference>
<dbReference type="Gene3D" id="2.40.128.700">
    <property type="match status" value="1"/>
</dbReference>
<dbReference type="Gene3D" id="3.30.1120.100">
    <property type="match status" value="1"/>
</dbReference>
<dbReference type="Gene3D" id="3.30.70.3330">
    <property type="match status" value="1"/>
</dbReference>
<dbReference type="Gene3D" id="6.10.60.10">
    <property type="match status" value="1"/>
</dbReference>
<dbReference type="Gene3D" id="6.20.240.10">
    <property type="match status" value="1"/>
</dbReference>
<dbReference type="Gene3D" id="3.20.20.70">
    <property type="entry name" value="Aldolase class I"/>
    <property type="match status" value="1"/>
</dbReference>
<dbReference type="Gene3D" id="3.10.129.10">
    <property type="entry name" value="Hotdog Thioesterase"/>
    <property type="match status" value="1"/>
</dbReference>
<dbReference type="Gene3D" id="3.40.366.10">
    <property type="entry name" value="Malonyl-Coenzyme A Acyl Carrier Protein, domain 2"/>
    <property type="match status" value="3"/>
</dbReference>
<dbReference type="InterPro" id="IPR001227">
    <property type="entry name" value="Ac_transferase_dom_sf"/>
</dbReference>
<dbReference type="InterPro" id="IPR014043">
    <property type="entry name" value="Acyl_transferase_dom"/>
</dbReference>
<dbReference type="InterPro" id="IPR016035">
    <property type="entry name" value="Acyl_Trfase/lysoPLipase"/>
</dbReference>
<dbReference type="InterPro" id="IPR013785">
    <property type="entry name" value="Aldolase_TIM"/>
</dbReference>
<dbReference type="InterPro" id="IPR039569">
    <property type="entry name" value="FAS1-like_DH_region"/>
</dbReference>
<dbReference type="InterPro" id="IPR016452">
    <property type="entry name" value="Fas1/AflB-like"/>
</dbReference>
<dbReference type="InterPro" id="IPR013565">
    <property type="entry name" value="Fas1/AflB-like_central"/>
</dbReference>
<dbReference type="InterPro" id="IPR040883">
    <property type="entry name" value="FAS_meander"/>
</dbReference>
<dbReference type="InterPro" id="IPR003965">
    <property type="entry name" value="Fatty_acid_synthase"/>
</dbReference>
<dbReference type="InterPro" id="IPR050830">
    <property type="entry name" value="Fungal_FAS"/>
</dbReference>
<dbReference type="InterPro" id="IPR029069">
    <property type="entry name" value="HotDog_dom_sf"/>
</dbReference>
<dbReference type="InterPro" id="IPR002539">
    <property type="entry name" value="MaoC-like_dom"/>
</dbReference>
<dbReference type="InterPro" id="IPR032088">
    <property type="entry name" value="SAT"/>
</dbReference>
<dbReference type="PANTHER" id="PTHR10982:SF21">
    <property type="entry name" value="FATTY ACID SYNTHASE SUBUNIT BETA"/>
    <property type="match status" value="1"/>
</dbReference>
<dbReference type="PANTHER" id="PTHR10982">
    <property type="entry name" value="MALONYL COA-ACYL CARRIER PROTEIN TRANSACYLASE"/>
    <property type="match status" value="1"/>
</dbReference>
<dbReference type="Pfam" id="PF00698">
    <property type="entry name" value="Acyl_transf_1"/>
    <property type="match status" value="1"/>
</dbReference>
<dbReference type="Pfam" id="PF08354">
    <property type="entry name" value="Fas1-AflB-like_hel"/>
    <property type="match status" value="1"/>
</dbReference>
<dbReference type="Pfam" id="PF13452">
    <property type="entry name" value="FAS1_DH_region"/>
    <property type="match status" value="1"/>
</dbReference>
<dbReference type="Pfam" id="PF22235">
    <property type="entry name" value="FAS1_thioest_ins"/>
    <property type="match status" value="1"/>
</dbReference>
<dbReference type="Pfam" id="PF17951">
    <property type="entry name" value="FAS_meander"/>
    <property type="match status" value="1"/>
</dbReference>
<dbReference type="Pfam" id="PF01575">
    <property type="entry name" value="MaoC_dehydratas"/>
    <property type="match status" value="1"/>
</dbReference>
<dbReference type="Pfam" id="PF16073">
    <property type="entry name" value="SAT"/>
    <property type="match status" value="1"/>
</dbReference>
<dbReference type="PIRSF" id="PIRSF005562">
    <property type="entry name" value="FAS_yeast_beta"/>
    <property type="match status" value="1"/>
</dbReference>
<dbReference type="PRINTS" id="PR01483">
    <property type="entry name" value="FASYNTHASE"/>
</dbReference>
<dbReference type="SMART" id="SM00827">
    <property type="entry name" value="PKS_AT"/>
    <property type="match status" value="1"/>
</dbReference>
<dbReference type="SUPFAM" id="SSF52151">
    <property type="entry name" value="FabD/lysophospholipase-like"/>
    <property type="match status" value="2"/>
</dbReference>
<dbReference type="SUPFAM" id="SSF51395">
    <property type="entry name" value="FMN-linked oxidoreductases"/>
    <property type="match status" value="1"/>
</dbReference>
<dbReference type="SUPFAM" id="SSF54637">
    <property type="entry name" value="Thioesterase/thiol ester dehydrase-isomerase"/>
    <property type="match status" value="2"/>
</dbReference>
<gene>
    <name evidence="6" type="primary">oryfasB</name>
    <name type="ORF">AO090010000156</name>
</gene>
<feature type="chain" id="PRO_0000450484" description="Fatty acid synthase subunit beta">
    <location>
        <begin position="1"/>
        <end position="2026"/>
    </location>
</feature>
<feature type="domain" description="MaoC-like" evidence="3">
    <location>
        <begin position="1512"/>
        <end position="1625"/>
    </location>
</feature>
<feature type="region of interest" description="Acetyltransferase (AT) domain" evidence="3">
    <location>
        <begin position="148"/>
        <end position="526"/>
    </location>
</feature>
<feature type="region of interest" description="Enoyl reductase (ER) domain" evidence="3">
    <location>
        <begin position="579"/>
        <end position="824"/>
    </location>
</feature>
<feature type="region of interest" description="Dehydratase (DH) domain" evidence="3">
    <location>
        <begin position="1130"/>
        <end position="1604"/>
    </location>
</feature>
<feature type="region of interest" description="Malonyl/palmitoyl transferase (MT/PT) domain" evidence="3">
    <location>
        <begin position="1643"/>
        <end position="2016"/>
    </location>
</feature>
<feature type="active site" description="For acetyltransferase activity" evidence="4">
    <location>
        <position position="268"/>
    </location>
</feature>
<feature type="active site" description="For malonyltransferase activity" evidence="4">
    <location>
        <position position="1788"/>
    </location>
</feature>
<evidence type="ECO:0000250" key="1">
    <source>
        <dbReference type="UniProtKB" id="P19097"/>
    </source>
</evidence>
<evidence type="ECO:0000250" key="2">
    <source>
        <dbReference type="UniProtKB" id="Q8TGA1"/>
    </source>
</evidence>
<evidence type="ECO:0000255" key="3"/>
<evidence type="ECO:0000255" key="4">
    <source>
        <dbReference type="PIRSR" id="PIRSR005562-1"/>
    </source>
</evidence>
<evidence type="ECO:0000269" key="5">
    <source>
    </source>
</evidence>
<evidence type="ECO:0000303" key="6">
    <source>
    </source>
</evidence>
<evidence type="ECO:0000305" key="7"/>
<evidence type="ECO:0000305" key="8">
    <source>
    </source>
</evidence>
<sequence length="2026" mass="224257">MASTPSSGSYDLAIVTPTEDHSLRSFSLSQGNVQQTFLVSTQDGAFLDQQKASFLQSYSKDQSILGLVFEFLQFLLDEACPPAPLGAFLGAIESQCVRDANIHDLIVSEPEAKNIIRTYYRAHAVAGLNPRPAPSGLFSTVNIEAHRILMAFGGQGSTNLVCVDELADLYSLYQPLLEPLIASVAPALASLSREPSTLQHYLGREIDLYSWLTIPESRPDRAFTATAAVSFPIIGLLDMAHYYVLGKLLDSDSPKRLRSALQGLTGHSQGIIVAAAVAQADTWASFLAQAQWAIRLLFWMGYECHTAAPASPLSSAAIRDSIEHGEGSPSWLLSVRGLRSPALDALITDCNRRLPESEHLSIGLINTERNIVVAGSPRSLRGLCLRLREIEADDGQDQSRVPFRQRKPVVHHTFLPVSAPFHSSHLRAAADRVKERFPDASSPQVGDLLTAVYHTRTGQDMREMFSPSNNLIHSLVEAVACETVDWPATLQVSRSKPPSHIVLLSSSRLSDLVSEIVDGRGVRIIAGTVLAPTDPAVLGGKAELLTTKPSQAPTPWAELFKARLVAGPDGRPILETRLSQLLQAPPIITAGMTPTTVHWDFVAAVMQAGYHVELAGGGYFDAAGMTTAIEKLAAHVPPGRGITCNLIYASPHSIAFQIPLIRSMIQRGIPIDGLTIGAGVPSQDVVNEWIQTLGIKHLSLKPGSIAAIYEVIEIAKKHPTFPIILQWTGGRGGGHHSCEDFHEPLLQTYRDIRRCSNLYLVVGSGFGQADQMHPYITGEWSLSFGRPVMPCDGILIGSRMMVAREAHTSPQAKELILAAAGVADSEWEQSFKKPTGGVLTVQSEMGQPIHKLATRGVRLWHEMDKTIFSLPRDKRVAALNARKAEIIRRLSADFAKPWFGYNAAGDAVDLEDMTYTEVIARLIRLVYVSHQHRWIDPSYRQLVLDFTYRTLERVSNADYATDKLDLSQPEQFVEQVQQLCPAATTRRLHPDDVRFFLTICKQRGRKPVNFIPALDEDFEYWFKKDSLWQSEDVDSIIDQDADRVCILQGPVAVQYSRRADQSAREILDEIHHGLANHFEEGPSQSDRPSLAISEMVSARVTVTESNTHRIIRPTSESLPSVEDWQAFLASQVTGSVRSAIMAEEVLRGSQRQANPLRRVLEPRTGQSIQIPLDGRDLRLVEDAKNRPLVHIKPSGDQEVAVDFYYYDFVETPGNLRFTYKFDSKSLSLVENLDGRDDRVKLFYAHLWLGRADLSYHRLSEVFEGEEITLSSDLHRHLHNALRHTVPDATASATTNTLPLEAAIIAAWKPLMEPLFVAELQGDLLRLVHLSNSIRYTPGAAPLEVNDVVATKSQVRAVTIKETGKTISVEAQIFRSKTLVATVTSEFFIKGSFSDYETTFSHQDEAAIELKVQSAIDEALLRDREWFLLDDPTQSLIDKTLVFRLHTVTRWKDQSTFTSLKTTGSIYTKHWNGTEQKVGTVASEVVECHGNPVIDFLQRKGTVVQEKVPLKHPGLIDNGSRTIRLPLDNALYSSVSKDYNPIHTSSVFARFADLPGTITHGMYTAAVSRAVTECLAADGETGRLRSFSASFVGMVLPGDQLTVRIRHEAMCHGRMVLSVAAYREGTDEKVLQGEAEVEQRTSAYLFTGQGSQAQNMGMQLYDSSAVARSVWDEVDRRLLDQYGWSILNVVRANPKQITIHFRGARGRRIRDNYLAMRTETRMPDGSTRLEPILRDLTAKSESYTFFDSRGLLYATQFAQPAILLMEKAAFEDMKANGLIQEGAAFAGHSLGEYGVLASLVDFLPFEMMMSVVFYRGLVMQFTMERDSNGHTGFSMVAVSPKRVGKYFDEAMLRIVVDLIHRQSGKLLEIVNFNVEAEQYVCAGHVRNIYILSGILDLLSRSATGPQLVASLRSASDPAITDVAKEIAVYLEKAPQLNNPTELKRGRATIPLQGIDVPFHSSHLRSGVSVYRRFLEERIQAENVQVDRLVGKFIPNVMGKPFAIDRSYLEEAAAVTGSSVLRELALAA</sequence>
<organism>
    <name type="scientific">Aspergillus oryzae (strain ATCC 42149 / RIB 40)</name>
    <name type="common">Yellow koji mold</name>
    <dbReference type="NCBI Taxonomy" id="510516"/>
    <lineage>
        <taxon>Eukaryota</taxon>
        <taxon>Fungi</taxon>
        <taxon>Dikarya</taxon>
        <taxon>Ascomycota</taxon>
        <taxon>Pezizomycotina</taxon>
        <taxon>Eurotiomycetes</taxon>
        <taxon>Eurotiomycetidae</taxon>
        <taxon>Eurotiales</taxon>
        <taxon>Aspergillaceae</taxon>
        <taxon>Aspergillus</taxon>
        <taxon>Aspergillus subgen. Circumdati</taxon>
    </lineage>
</organism>
<comment type="function">
    <text evidence="5 8">Fatty acid synthase beta subunit; part of the gene cluster that mediates the biosynthesis of oryzines, natural products with an unusual maleidride backbone (PubMed:30104550). The two subunits of the fungal fatty acid synthase oryfasA and oryfasB probably form octenoic acid (Probable). This fatty acid is most likely activated by the acyl-CoA ligase oryP to give octenyl-CoA before the citrate synthase-like protein oryE catalyzes condensation with oxaloacetate to form tricarboxylic acid (Probable). The next steps of the pathways are conjectural, but a favorite possible route has been proposed, beginning with decarboxylation and concomitant dehydration by the decarboxylase oryM, followed by tautomerization, which may lead to the production of a diene intermediate (Probable). Reduction of this diene intermediate could give the known metabolite piliformic acid (Probable). On the pathway to oryzine B and oryzine A, however, hydroxylation of the diene by the alpha-ketoglutarate-dependent dioxygenase oryG and lactonisation by the lactonohydrolases oryH or oryL could give oryzine B directly (Probable). Finally, enoyl reduction by the dehydrogenase oryD would then convert oryzine B into oryzine A (Probable).</text>
</comment>
<comment type="catalytic activity">
    <reaction evidence="2">
        <text>acetyl-CoA + n malonyl-CoA + 2n NADPH + 4n H(+) = a long-chain-acyl-CoA + n CoA + n CO2 + 2n NADP(+).</text>
        <dbReference type="EC" id="2.3.1.86"/>
    </reaction>
</comment>
<comment type="catalytic activity">
    <reaction evidence="2">
        <text>holo-[ACP] + acetyl-CoA = acetyl-[ACP] + CoA</text>
        <dbReference type="Rhea" id="RHEA:41788"/>
        <dbReference type="Rhea" id="RHEA-COMP:9621"/>
        <dbReference type="Rhea" id="RHEA-COMP:9685"/>
        <dbReference type="ChEBI" id="CHEBI:57287"/>
        <dbReference type="ChEBI" id="CHEBI:57288"/>
        <dbReference type="ChEBI" id="CHEBI:64479"/>
        <dbReference type="ChEBI" id="CHEBI:78446"/>
        <dbReference type="EC" id="2.3.1.38"/>
    </reaction>
</comment>
<comment type="catalytic activity">
    <reaction evidence="2">
        <text>holo-[ACP] + malonyl-CoA = malonyl-[ACP] + CoA</text>
        <dbReference type="Rhea" id="RHEA:41792"/>
        <dbReference type="Rhea" id="RHEA-COMP:9623"/>
        <dbReference type="Rhea" id="RHEA-COMP:9685"/>
        <dbReference type="ChEBI" id="CHEBI:57287"/>
        <dbReference type="ChEBI" id="CHEBI:57384"/>
        <dbReference type="ChEBI" id="CHEBI:64479"/>
        <dbReference type="ChEBI" id="CHEBI:78449"/>
        <dbReference type="EC" id="2.3.1.39"/>
    </reaction>
</comment>
<comment type="catalytic activity">
    <reaction evidence="2">
        <text>a (3R)-hydroxyacyl-[ACP] = a (2E)-enoyl-[ACP] + H2O</text>
        <dbReference type="Rhea" id="RHEA:13097"/>
        <dbReference type="Rhea" id="RHEA-COMP:9925"/>
        <dbReference type="Rhea" id="RHEA-COMP:9945"/>
        <dbReference type="ChEBI" id="CHEBI:15377"/>
        <dbReference type="ChEBI" id="CHEBI:78784"/>
        <dbReference type="ChEBI" id="CHEBI:78827"/>
        <dbReference type="EC" id="4.2.1.59"/>
    </reaction>
</comment>
<comment type="catalytic activity">
    <reaction evidence="2">
        <text>a 2,3-saturated acyl-[ACP] + NAD(+) = a (2E)-enoyl-[ACP] + NADH + H(+)</text>
        <dbReference type="Rhea" id="RHEA:10240"/>
        <dbReference type="Rhea" id="RHEA-COMP:9925"/>
        <dbReference type="Rhea" id="RHEA-COMP:9926"/>
        <dbReference type="ChEBI" id="CHEBI:15378"/>
        <dbReference type="ChEBI" id="CHEBI:57540"/>
        <dbReference type="ChEBI" id="CHEBI:57945"/>
        <dbReference type="ChEBI" id="CHEBI:78784"/>
        <dbReference type="ChEBI" id="CHEBI:78785"/>
        <dbReference type="EC" id="1.3.1.9"/>
    </reaction>
</comment>
<comment type="catalytic activity">
    <reaction evidence="2">
        <text>(9Z)-octadecenoyl-[ACP] + H2O = (9Z)-octadecenoate + holo-[ACP] + H(+)</text>
        <dbReference type="Rhea" id="RHEA:15057"/>
        <dbReference type="Rhea" id="RHEA-COMP:9685"/>
        <dbReference type="Rhea" id="RHEA-COMP:9924"/>
        <dbReference type="ChEBI" id="CHEBI:15377"/>
        <dbReference type="ChEBI" id="CHEBI:15378"/>
        <dbReference type="ChEBI" id="CHEBI:30823"/>
        <dbReference type="ChEBI" id="CHEBI:64479"/>
        <dbReference type="ChEBI" id="CHEBI:78783"/>
        <dbReference type="EC" id="3.1.2.14"/>
    </reaction>
</comment>
<comment type="pathway">
    <text evidence="8">Secondary metabolite biosynthesis.</text>
</comment>
<comment type="subunit">
    <text evidence="1">[Alpha(6)beta(6)] hexamers of two multifunctional subunits (alpha and beta).</text>
</comment>
<comment type="similarity">
    <text evidence="7">Belongs to the fungal fatty acid synthetase subunit beta family.</text>
</comment>
<name>ORYB_ASPOR</name>
<keyword id="KW-0378">Hydrolase</keyword>
<keyword id="KW-0456">Lyase</keyword>
<keyword id="KW-0511">Multifunctional enzyme</keyword>
<keyword id="KW-0520">NAD</keyword>
<keyword id="KW-0521">NADP</keyword>
<keyword id="KW-0560">Oxidoreductase</keyword>
<keyword id="KW-1185">Reference proteome</keyword>
<keyword id="KW-0808">Transferase</keyword>
<protein>
    <recommendedName>
        <fullName evidence="6">Fatty acid synthase subunit beta</fullName>
        <ecNumber evidence="8">2.3.1.86</ecNumber>
    </recommendedName>
    <alternativeName>
        <fullName evidence="2">S-acyl fatty acid synthase thioesterase</fullName>
        <ecNumber evidence="2">3.1.2.14</ecNumber>
    </alternativeName>
    <domain>
        <recommendedName>
            <fullName evidence="2">3-hydroxyacyl-[acyl-carrier-protein] dehydratase</fullName>
            <ecNumber evidence="2">4.2.1.59</ecNumber>
        </recommendedName>
    </domain>
    <domain>
        <recommendedName>
            <fullName evidence="2">Enoyl-[acyl-carrier-protein] reductase [NADH]</fullName>
            <ecNumber evidence="2">1.3.1.9</ecNumber>
        </recommendedName>
    </domain>
    <domain>
        <recommendedName>
            <fullName evidence="2">[Acyl-carrier-protein] acetyltransferase</fullName>
            <ecNumber evidence="2">2.3.1.38</ecNumber>
        </recommendedName>
    </domain>
    <domain>
        <recommendedName>
            <fullName evidence="2">[Acyl-carrier-protein] malonyltransferase</fullName>
            <ecNumber evidence="2">2.3.1.39</ecNumber>
        </recommendedName>
        <alternativeName>
            <fullName evidence="6">Oryzines biosynthesis cluster protein oryfasB</fullName>
        </alternativeName>
    </domain>
</protein>
<reference key="1">
    <citation type="journal article" date="2005" name="Nature">
        <title>Genome sequencing and analysis of Aspergillus oryzae.</title>
        <authorList>
            <person name="Machida M."/>
            <person name="Asai K."/>
            <person name="Sano M."/>
            <person name="Tanaka T."/>
            <person name="Kumagai T."/>
            <person name="Terai G."/>
            <person name="Kusumoto K."/>
            <person name="Arima T."/>
            <person name="Akita O."/>
            <person name="Kashiwagi Y."/>
            <person name="Abe K."/>
            <person name="Gomi K."/>
            <person name="Horiuchi H."/>
            <person name="Kitamoto K."/>
            <person name="Kobayashi T."/>
            <person name="Takeuchi M."/>
            <person name="Denning D.W."/>
            <person name="Galagan J.E."/>
            <person name="Nierman W.C."/>
            <person name="Yu J."/>
            <person name="Archer D.B."/>
            <person name="Bennett J.W."/>
            <person name="Bhatnagar D."/>
            <person name="Cleveland T.E."/>
            <person name="Fedorova N.D."/>
            <person name="Gotoh O."/>
            <person name="Horikawa H."/>
            <person name="Hosoyama A."/>
            <person name="Ichinomiya M."/>
            <person name="Igarashi R."/>
            <person name="Iwashita K."/>
            <person name="Juvvadi P.R."/>
            <person name="Kato M."/>
            <person name="Kato Y."/>
            <person name="Kin T."/>
            <person name="Kokubun A."/>
            <person name="Maeda H."/>
            <person name="Maeyama N."/>
            <person name="Maruyama J."/>
            <person name="Nagasaki H."/>
            <person name="Nakajima T."/>
            <person name="Oda K."/>
            <person name="Okada K."/>
            <person name="Paulsen I."/>
            <person name="Sakamoto K."/>
            <person name="Sawano T."/>
            <person name="Takahashi M."/>
            <person name="Takase K."/>
            <person name="Terabayashi Y."/>
            <person name="Wortman J.R."/>
            <person name="Yamada O."/>
            <person name="Yamagata Y."/>
            <person name="Anazawa H."/>
            <person name="Hata Y."/>
            <person name="Koide Y."/>
            <person name="Komori T."/>
            <person name="Koyama Y."/>
            <person name="Minetoki T."/>
            <person name="Suharnan S."/>
            <person name="Tanaka A."/>
            <person name="Isono K."/>
            <person name="Kuhara S."/>
            <person name="Ogasawara N."/>
            <person name="Kikuchi H."/>
        </authorList>
    </citation>
    <scope>NUCLEOTIDE SEQUENCE [LARGE SCALE GENOMIC DNA]</scope>
    <source>
        <strain>ATCC 42149 / RIB 40</strain>
    </source>
</reference>
<reference key="2">
    <citation type="journal article" date="2018" name="J. Fungi">
        <title>Oryzines A &amp; B, maleidride congeners from Aspergillus oryzae and their putative biosynthesis.</title>
        <authorList>
            <person name="Wasil Z."/>
            <person name="Kuhnert E."/>
            <person name="Simpson T.J."/>
            <person name="Cox R.J."/>
        </authorList>
    </citation>
    <scope>FUNCTION</scope>
    <scope>PATHWAY</scope>
</reference>